<comment type="function">
    <text evidence="1">Removes the formyl group from the N-terminal Met of newly synthesized proteins. Requires at least a dipeptide for an efficient rate of reaction. N-terminal L-methionine is a prerequisite for activity but the enzyme has broad specificity at other positions.</text>
</comment>
<comment type="catalytic activity">
    <reaction evidence="1">
        <text>N-terminal N-formyl-L-methionyl-[peptide] + H2O = N-terminal L-methionyl-[peptide] + formate</text>
        <dbReference type="Rhea" id="RHEA:24420"/>
        <dbReference type="Rhea" id="RHEA-COMP:10639"/>
        <dbReference type="Rhea" id="RHEA-COMP:10640"/>
        <dbReference type="ChEBI" id="CHEBI:15377"/>
        <dbReference type="ChEBI" id="CHEBI:15740"/>
        <dbReference type="ChEBI" id="CHEBI:49298"/>
        <dbReference type="ChEBI" id="CHEBI:64731"/>
        <dbReference type="EC" id="3.5.1.88"/>
    </reaction>
</comment>
<comment type="cofactor">
    <cofactor evidence="1">
        <name>Fe(2+)</name>
        <dbReference type="ChEBI" id="CHEBI:29033"/>
    </cofactor>
    <text evidence="1">Binds 1 Fe(2+) ion.</text>
</comment>
<comment type="similarity">
    <text evidence="1">Belongs to the polypeptide deformylase family.</text>
</comment>
<evidence type="ECO:0000255" key="1">
    <source>
        <dbReference type="HAMAP-Rule" id="MF_00163"/>
    </source>
</evidence>
<organism>
    <name type="scientific">Roseiflexus sp. (strain RS-1)</name>
    <dbReference type="NCBI Taxonomy" id="357808"/>
    <lineage>
        <taxon>Bacteria</taxon>
        <taxon>Bacillati</taxon>
        <taxon>Chloroflexota</taxon>
        <taxon>Chloroflexia</taxon>
        <taxon>Chloroflexales</taxon>
        <taxon>Roseiflexineae</taxon>
        <taxon>Roseiflexaceae</taxon>
        <taxon>Roseiflexus</taxon>
    </lineage>
</organism>
<sequence>MALRRILRIDNPDDKKILTTRCHPVRLPNPALKQLVADMFETMHAASGVGLAAPQIGITQRLAVISIPPVVEERPDGSKVEVAPEQNFVLINPEIIKASDQEDVGLEGCLSLPGWYGEVPRAAWVTVEYTDLNGRRQRIRRATGLLGRALQHEIDHLDGILFTERIRDLSTLKDYSEEMAPTAAE</sequence>
<dbReference type="EC" id="3.5.1.88" evidence="1"/>
<dbReference type="EMBL" id="CP000686">
    <property type="protein sequence ID" value="ABQ89461.1"/>
    <property type="molecule type" value="Genomic_DNA"/>
</dbReference>
<dbReference type="RefSeq" id="WP_011955814.1">
    <property type="nucleotide sequence ID" value="NC_009523.1"/>
</dbReference>
<dbReference type="SMR" id="A5US58"/>
<dbReference type="STRING" id="357808.RoseRS_1052"/>
<dbReference type="KEGG" id="rrs:RoseRS_1052"/>
<dbReference type="eggNOG" id="COG0242">
    <property type="taxonomic scope" value="Bacteria"/>
</dbReference>
<dbReference type="HOGENOM" id="CLU_061901_5_2_0"/>
<dbReference type="OrthoDB" id="9784988at2"/>
<dbReference type="Proteomes" id="UP000006554">
    <property type="component" value="Chromosome"/>
</dbReference>
<dbReference type="GO" id="GO:0046872">
    <property type="term" value="F:metal ion binding"/>
    <property type="evidence" value="ECO:0007669"/>
    <property type="project" value="UniProtKB-KW"/>
</dbReference>
<dbReference type="GO" id="GO:0042586">
    <property type="term" value="F:peptide deformylase activity"/>
    <property type="evidence" value="ECO:0007669"/>
    <property type="project" value="UniProtKB-UniRule"/>
</dbReference>
<dbReference type="GO" id="GO:0043686">
    <property type="term" value="P:co-translational protein modification"/>
    <property type="evidence" value="ECO:0007669"/>
    <property type="project" value="TreeGrafter"/>
</dbReference>
<dbReference type="GO" id="GO:0006412">
    <property type="term" value="P:translation"/>
    <property type="evidence" value="ECO:0007669"/>
    <property type="project" value="UniProtKB-UniRule"/>
</dbReference>
<dbReference type="CDD" id="cd00487">
    <property type="entry name" value="Pep_deformylase"/>
    <property type="match status" value="1"/>
</dbReference>
<dbReference type="Gene3D" id="3.90.45.10">
    <property type="entry name" value="Peptide deformylase"/>
    <property type="match status" value="1"/>
</dbReference>
<dbReference type="HAMAP" id="MF_00163">
    <property type="entry name" value="Pep_deformylase"/>
    <property type="match status" value="1"/>
</dbReference>
<dbReference type="InterPro" id="IPR023635">
    <property type="entry name" value="Peptide_deformylase"/>
</dbReference>
<dbReference type="InterPro" id="IPR036821">
    <property type="entry name" value="Peptide_deformylase_sf"/>
</dbReference>
<dbReference type="NCBIfam" id="TIGR00079">
    <property type="entry name" value="pept_deformyl"/>
    <property type="match status" value="1"/>
</dbReference>
<dbReference type="NCBIfam" id="NF001159">
    <property type="entry name" value="PRK00150.1-3"/>
    <property type="match status" value="1"/>
</dbReference>
<dbReference type="PANTHER" id="PTHR10458">
    <property type="entry name" value="PEPTIDE DEFORMYLASE"/>
    <property type="match status" value="1"/>
</dbReference>
<dbReference type="PANTHER" id="PTHR10458:SF22">
    <property type="entry name" value="PEPTIDE DEFORMYLASE"/>
    <property type="match status" value="1"/>
</dbReference>
<dbReference type="Pfam" id="PF01327">
    <property type="entry name" value="Pep_deformylase"/>
    <property type="match status" value="1"/>
</dbReference>
<dbReference type="PIRSF" id="PIRSF004749">
    <property type="entry name" value="Pep_def"/>
    <property type="match status" value="1"/>
</dbReference>
<dbReference type="PRINTS" id="PR01576">
    <property type="entry name" value="PDEFORMYLASE"/>
</dbReference>
<dbReference type="SUPFAM" id="SSF56420">
    <property type="entry name" value="Peptide deformylase"/>
    <property type="match status" value="1"/>
</dbReference>
<gene>
    <name evidence="1" type="primary">def</name>
    <name type="ordered locus">RoseRS_1052</name>
</gene>
<feature type="chain" id="PRO_1000200745" description="Peptide deformylase">
    <location>
        <begin position="1"/>
        <end position="185"/>
    </location>
</feature>
<feature type="active site" evidence="1">
    <location>
        <position position="153"/>
    </location>
</feature>
<feature type="binding site" evidence="1">
    <location>
        <position position="109"/>
    </location>
    <ligand>
        <name>Fe cation</name>
        <dbReference type="ChEBI" id="CHEBI:24875"/>
    </ligand>
</feature>
<feature type="binding site" evidence="1">
    <location>
        <position position="152"/>
    </location>
    <ligand>
        <name>Fe cation</name>
        <dbReference type="ChEBI" id="CHEBI:24875"/>
    </ligand>
</feature>
<feature type="binding site" evidence="1">
    <location>
        <position position="156"/>
    </location>
    <ligand>
        <name>Fe cation</name>
        <dbReference type="ChEBI" id="CHEBI:24875"/>
    </ligand>
</feature>
<proteinExistence type="inferred from homology"/>
<keyword id="KW-0378">Hydrolase</keyword>
<keyword id="KW-0408">Iron</keyword>
<keyword id="KW-0479">Metal-binding</keyword>
<keyword id="KW-0648">Protein biosynthesis</keyword>
<reference key="1">
    <citation type="submission" date="2007-04" db="EMBL/GenBank/DDBJ databases">
        <title>Complete sequence of Roseiflexus sp. RS-1.</title>
        <authorList>
            <consortium name="US DOE Joint Genome Institute"/>
            <person name="Copeland A."/>
            <person name="Lucas S."/>
            <person name="Lapidus A."/>
            <person name="Barry K."/>
            <person name="Detter J.C."/>
            <person name="Glavina del Rio T."/>
            <person name="Hammon N."/>
            <person name="Israni S."/>
            <person name="Dalin E."/>
            <person name="Tice H."/>
            <person name="Pitluck S."/>
            <person name="Chertkov O."/>
            <person name="Brettin T."/>
            <person name="Bruce D."/>
            <person name="Han C."/>
            <person name="Schmutz J."/>
            <person name="Larimer F."/>
            <person name="Land M."/>
            <person name="Hauser L."/>
            <person name="Kyrpides N."/>
            <person name="Mikhailova N."/>
            <person name="Bryant D.A."/>
            <person name="Richardson P."/>
        </authorList>
    </citation>
    <scope>NUCLEOTIDE SEQUENCE [LARGE SCALE GENOMIC DNA]</scope>
    <source>
        <strain>RS-1</strain>
    </source>
</reference>
<name>DEF_ROSS1</name>
<accession>A5US58</accession>
<protein>
    <recommendedName>
        <fullName evidence="1">Peptide deformylase</fullName>
        <shortName evidence="1">PDF</shortName>
        <ecNumber evidence="1">3.5.1.88</ecNumber>
    </recommendedName>
    <alternativeName>
        <fullName evidence="1">Polypeptide deformylase</fullName>
    </alternativeName>
</protein>